<proteinExistence type="evidence at protein level"/>
<organism>
    <name type="scientific">Escherichia coli (strain K12)</name>
    <dbReference type="NCBI Taxonomy" id="83333"/>
    <lineage>
        <taxon>Bacteria</taxon>
        <taxon>Pseudomonadati</taxon>
        <taxon>Pseudomonadota</taxon>
        <taxon>Gammaproteobacteria</taxon>
        <taxon>Enterobacterales</taxon>
        <taxon>Enterobacteriaceae</taxon>
        <taxon>Escherichia</taxon>
    </lineage>
</organism>
<accession>P0DPC8</accession>
<accession>A0A385XJE1</accession>
<reference key="1">
    <citation type="journal article" date="1997" name="Science">
        <title>The complete genome sequence of Escherichia coli K-12.</title>
        <authorList>
            <person name="Blattner F.R."/>
            <person name="Plunkett G. III"/>
            <person name="Bloch C.A."/>
            <person name="Perna N.T."/>
            <person name="Burland V."/>
            <person name="Riley M."/>
            <person name="Collado-Vides J."/>
            <person name="Glasner J.D."/>
            <person name="Rode C.K."/>
            <person name="Mayhew G.F."/>
            <person name="Gregor J."/>
            <person name="Davis N.W."/>
            <person name="Kirkpatrick H.A."/>
            <person name="Goeden M.A."/>
            <person name="Rose D.J."/>
            <person name="Mau B."/>
            <person name="Shao Y."/>
        </authorList>
    </citation>
    <scope>NUCLEOTIDE SEQUENCE [LARGE SCALE GENOMIC DNA]</scope>
    <source>
        <strain>K12 / MG1655 / ATCC 47076</strain>
    </source>
</reference>
<reference key="2">
    <citation type="journal article" date="2017" name="J. Proteome Res.">
        <title>Comparative proteomics enables identification of nonannotated cold shock proteins in E. coli.</title>
        <authorList>
            <person name="D'Lima N.G."/>
            <person name="Khitun A."/>
            <person name="Rosenbloom A.D."/>
            <person name="Yuan P."/>
            <person name="Gassaway B.M."/>
            <person name="Barber K.W."/>
            <person name="Rinehart J."/>
            <person name="Slavoff S.A."/>
        </authorList>
    </citation>
    <scope>IDENTIFICATION</scope>
    <scope>INDUCTION BY COLD SHOCK</scope>
    <source>
        <strain>K12 / MG1655 / ATCC 47076</strain>
    </source>
</reference>
<evidence type="ECO:0000269" key="1">
    <source>
    </source>
</evidence>
<evidence type="ECO:0000303" key="2">
    <source>
    </source>
</evidence>
<evidence type="ECO:0000305" key="3"/>
<dbReference type="EMBL" id="U00096">
    <property type="protein sequence ID" value="AYC08189.1"/>
    <property type="molecule type" value="Genomic_DNA"/>
</dbReference>
<dbReference type="RefSeq" id="WP_071524879.1">
    <property type="nucleotide sequence ID" value="NZ_STEB01000006.1"/>
</dbReference>
<dbReference type="SMR" id="P0DPC8"/>
<dbReference type="EnsemblBacteria" id="AYC08189">
    <property type="protein sequence ID" value="AYC08189"/>
    <property type="gene ID" value="b4723"/>
</dbReference>
<dbReference type="InParanoid" id="P0DPC8"/>
<dbReference type="OrthoDB" id="6562785at2"/>
<dbReference type="BioCyc" id="EcoCyc:MONOMER0-4393"/>
<dbReference type="PRO" id="PR:P0DPC8"/>
<dbReference type="Proteomes" id="UP000000625">
    <property type="component" value="Chromosome"/>
</dbReference>
<dbReference type="InterPro" id="IPR056946">
    <property type="entry name" value="YmcF-like"/>
</dbReference>
<dbReference type="Pfam" id="PF23641">
    <property type="entry name" value="YmcF-like"/>
    <property type="match status" value="1"/>
</dbReference>
<sequence length="62" mass="7104">MTQHLHFRCPCCHGSQYRTSAFDVTERNPLGAKCIFCKSTMITFDNVALQIRTDHAPLDFTK</sequence>
<protein>
    <recommendedName>
        <fullName evidence="2">Protein YmcF</fullName>
    </recommendedName>
</protein>
<feature type="chain" id="PRO_0000442708" description="Protein YmcF">
    <location>
        <begin position="1"/>
        <end position="62"/>
    </location>
</feature>
<name>YMCF_ECOLI</name>
<keyword id="KW-1185">Reference proteome</keyword>
<gene>
    <name evidence="2" type="primary">ymcF</name>
    <name type="ordered locus">b4723</name>
</gene>
<comment type="induction">
    <text evidence="1">By cold shock, 10 degrees Celsius (at protein level).</text>
</comment>
<comment type="miscellaneous">
    <text evidence="1">Uses the non-canonical initiation codon AUU, which may limit its expression (PubMed:28861998).</text>
</comment>
<comment type="similarity">
    <text evidence="3">Belongs to the YmcF/YnqF peptide family.</text>
</comment>